<feature type="chain" id="PRO_1000023790" description="Probable malate:quinone oxidoreductase">
    <location>
        <begin position="1"/>
        <end position="500"/>
    </location>
</feature>
<organism>
    <name type="scientific">Bacillus thuringiensis (strain Al Hakam)</name>
    <dbReference type="NCBI Taxonomy" id="412694"/>
    <lineage>
        <taxon>Bacteria</taxon>
        <taxon>Bacillati</taxon>
        <taxon>Bacillota</taxon>
        <taxon>Bacilli</taxon>
        <taxon>Bacillales</taxon>
        <taxon>Bacillaceae</taxon>
        <taxon>Bacillus</taxon>
        <taxon>Bacillus cereus group</taxon>
    </lineage>
</organism>
<sequence>MSNMQQKTDVILIGAGIMSATLGSLLKELAPEWEIKVFEKLASAGEESSNEWNNAGTGHSALCELNYTSEKSDGSIDISKAVKVNEQFQLSRQFWAYLVKSKLIRNPQDFIMPLPHMSLVQGEKNVEFLKNRFEALSKNPLFQGMEFSDAPETLKKWLPLIMEGRTSNEPMAATKIDSGTDVNFGALTRMLFDYLQTKNVELNYKHSVENIKRTKNGLWEVKVHDINSGKIEHHTAKFVFIGGGGGSLPLLQKTGIPESKHIGGFPVSGLFMVCKNQKVVEQHHAKVYGKAKVGAPPMSVPHLDTRYIDNKKALLFGPFAGFSPKFLKTGSNLDLIGSVKPNNVLTMLAAGVKEMGLTKYLIQQVMLSHEKRMEELREFIPNAKSEDWDIVVAGQRVQVIKDTDAGGKGTLQFGTEVVSAADGSIAALLGASPGASTAVHVMLEVLEKCFPSRMVEWEGKIKEMIPSYGISLTENPRLFQDLHTSTGRTLGLNEKETVHN</sequence>
<gene>
    <name evidence="1" type="primary">mqo</name>
    <name type="ordered locus">BALH_2659</name>
</gene>
<keyword id="KW-0274">FAD</keyword>
<keyword id="KW-0285">Flavoprotein</keyword>
<keyword id="KW-0560">Oxidoreductase</keyword>
<keyword id="KW-0816">Tricarboxylic acid cycle</keyword>
<proteinExistence type="inferred from homology"/>
<protein>
    <recommendedName>
        <fullName evidence="1">Probable malate:quinone oxidoreductase</fullName>
        <ecNumber evidence="1">1.1.5.4</ecNumber>
    </recommendedName>
    <alternativeName>
        <fullName evidence="1">MQO</fullName>
    </alternativeName>
    <alternativeName>
        <fullName evidence="1">Malate dehydrogenase [quinone]</fullName>
    </alternativeName>
</protein>
<reference key="1">
    <citation type="journal article" date="2007" name="J. Bacteriol.">
        <title>The complete genome sequence of Bacillus thuringiensis Al Hakam.</title>
        <authorList>
            <person name="Challacombe J.F."/>
            <person name="Altherr M.R."/>
            <person name="Xie G."/>
            <person name="Bhotika S.S."/>
            <person name="Brown N."/>
            <person name="Bruce D."/>
            <person name="Campbell C.S."/>
            <person name="Campbell M.L."/>
            <person name="Chen J."/>
            <person name="Chertkov O."/>
            <person name="Cleland C."/>
            <person name="Dimitrijevic M."/>
            <person name="Doggett N.A."/>
            <person name="Fawcett J.J."/>
            <person name="Glavina T."/>
            <person name="Goodwin L.A."/>
            <person name="Green L.D."/>
            <person name="Han C.S."/>
            <person name="Hill K.K."/>
            <person name="Hitchcock P."/>
            <person name="Jackson P.J."/>
            <person name="Keim P."/>
            <person name="Kewalramani A.R."/>
            <person name="Longmire J."/>
            <person name="Lucas S."/>
            <person name="Malfatti S."/>
            <person name="Martinez D."/>
            <person name="McMurry K."/>
            <person name="Meincke L.J."/>
            <person name="Misra M."/>
            <person name="Moseman B.L."/>
            <person name="Mundt M."/>
            <person name="Munk A.C."/>
            <person name="Okinaka R.T."/>
            <person name="Parson-Quintana B."/>
            <person name="Reilly L.P."/>
            <person name="Richardson P."/>
            <person name="Robinson D.L."/>
            <person name="Saunders E."/>
            <person name="Tapia R."/>
            <person name="Tesmer J.G."/>
            <person name="Thayer N."/>
            <person name="Thompson L.S."/>
            <person name="Tice H."/>
            <person name="Ticknor L.O."/>
            <person name="Wills P.L."/>
            <person name="Gilna P."/>
            <person name="Brettin T.S."/>
        </authorList>
    </citation>
    <scope>NUCLEOTIDE SEQUENCE [LARGE SCALE GENOMIC DNA]</scope>
    <source>
        <strain>Al Hakam</strain>
    </source>
</reference>
<accession>A0RFE8</accession>
<dbReference type="EC" id="1.1.5.4" evidence="1"/>
<dbReference type="EMBL" id="CP000485">
    <property type="protein sequence ID" value="ABK85941.1"/>
    <property type="molecule type" value="Genomic_DNA"/>
</dbReference>
<dbReference type="RefSeq" id="WP_000069163.1">
    <property type="nucleotide sequence ID" value="NC_008600.1"/>
</dbReference>
<dbReference type="SMR" id="A0RFE8"/>
<dbReference type="KEGG" id="btl:BALH_2659"/>
<dbReference type="HOGENOM" id="CLU_028151_0_0_9"/>
<dbReference type="UniPathway" id="UPA00223">
    <property type="reaction ID" value="UER01008"/>
</dbReference>
<dbReference type="GO" id="GO:0047545">
    <property type="term" value="F:2-hydroxyglutarate dehydrogenase activity"/>
    <property type="evidence" value="ECO:0007669"/>
    <property type="project" value="TreeGrafter"/>
</dbReference>
<dbReference type="GO" id="GO:0008924">
    <property type="term" value="F:L-malate dehydrogenase (quinone) activity"/>
    <property type="evidence" value="ECO:0007669"/>
    <property type="project" value="UniProtKB-UniRule"/>
</dbReference>
<dbReference type="GO" id="GO:0006099">
    <property type="term" value="P:tricarboxylic acid cycle"/>
    <property type="evidence" value="ECO:0007669"/>
    <property type="project" value="UniProtKB-UniRule"/>
</dbReference>
<dbReference type="HAMAP" id="MF_00212">
    <property type="entry name" value="MQO"/>
    <property type="match status" value="1"/>
</dbReference>
<dbReference type="InterPro" id="IPR036188">
    <property type="entry name" value="FAD/NAD-bd_sf"/>
</dbReference>
<dbReference type="InterPro" id="IPR006231">
    <property type="entry name" value="MQO"/>
</dbReference>
<dbReference type="NCBIfam" id="TIGR01320">
    <property type="entry name" value="mal_quin_oxido"/>
    <property type="match status" value="1"/>
</dbReference>
<dbReference type="NCBIfam" id="NF003603">
    <property type="entry name" value="PRK05257.1-1"/>
    <property type="match status" value="1"/>
</dbReference>
<dbReference type="NCBIfam" id="NF003604">
    <property type="entry name" value="PRK05257.1-3"/>
    <property type="match status" value="1"/>
</dbReference>
<dbReference type="NCBIfam" id="NF003605">
    <property type="entry name" value="PRK05257.1-4"/>
    <property type="match status" value="1"/>
</dbReference>
<dbReference type="NCBIfam" id="NF003606">
    <property type="entry name" value="PRK05257.2-1"/>
    <property type="match status" value="1"/>
</dbReference>
<dbReference type="NCBIfam" id="NF003608">
    <property type="entry name" value="PRK05257.2-4"/>
    <property type="match status" value="1"/>
</dbReference>
<dbReference type="NCBIfam" id="NF003610">
    <property type="entry name" value="PRK05257.3-1"/>
    <property type="match status" value="1"/>
</dbReference>
<dbReference type="NCBIfam" id="NF003611">
    <property type="entry name" value="PRK05257.3-2"/>
    <property type="match status" value="1"/>
</dbReference>
<dbReference type="NCBIfam" id="NF009875">
    <property type="entry name" value="PRK13339.1"/>
    <property type="match status" value="1"/>
</dbReference>
<dbReference type="PANTHER" id="PTHR43104">
    <property type="entry name" value="L-2-HYDROXYGLUTARATE DEHYDROGENASE, MITOCHONDRIAL"/>
    <property type="match status" value="1"/>
</dbReference>
<dbReference type="PANTHER" id="PTHR43104:SF2">
    <property type="entry name" value="L-2-HYDROXYGLUTARATE DEHYDROGENASE, MITOCHONDRIAL"/>
    <property type="match status" value="1"/>
</dbReference>
<dbReference type="Pfam" id="PF06039">
    <property type="entry name" value="Mqo"/>
    <property type="match status" value="1"/>
</dbReference>
<dbReference type="SUPFAM" id="SSF51905">
    <property type="entry name" value="FAD/NAD(P)-binding domain"/>
    <property type="match status" value="1"/>
</dbReference>
<name>MQO_BACAH</name>
<evidence type="ECO:0000255" key="1">
    <source>
        <dbReference type="HAMAP-Rule" id="MF_00212"/>
    </source>
</evidence>
<comment type="catalytic activity">
    <reaction evidence="1">
        <text>(S)-malate + a quinone = a quinol + oxaloacetate</text>
        <dbReference type="Rhea" id="RHEA:46012"/>
        <dbReference type="ChEBI" id="CHEBI:15589"/>
        <dbReference type="ChEBI" id="CHEBI:16452"/>
        <dbReference type="ChEBI" id="CHEBI:24646"/>
        <dbReference type="ChEBI" id="CHEBI:132124"/>
        <dbReference type="EC" id="1.1.5.4"/>
    </reaction>
</comment>
<comment type="cofactor">
    <cofactor evidence="1">
        <name>FAD</name>
        <dbReference type="ChEBI" id="CHEBI:57692"/>
    </cofactor>
</comment>
<comment type="pathway">
    <text evidence="1">Carbohydrate metabolism; tricarboxylic acid cycle; oxaloacetate from (S)-malate (quinone route): step 1/1.</text>
</comment>
<comment type="similarity">
    <text evidence="1">Belongs to the MQO family.</text>
</comment>